<gene>
    <name type="primary">GUA1</name>
    <name type="ordered locus">CAGL0F03927g</name>
</gene>
<dbReference type="EC" id="6.3.5.2" evidence="1"/>
<dbReference type="EMBL" id="CR380952">
    <property type="protein sequence ID" value="CAG59065.1"/>
    <property type="molecule type" value="Genomic_DNA"/>
</dbReference>
<dbReference type="RefSeq" id="XP_446141.1">
    <property type="nucleotide sequence ID" value="XM_446141.1"/>
</dbReference>
<dbReference type="SMR" id="Q6FUF3"/>
<dbReference type="FunCoup" id="Q6FUF3">
    <property type="interactions" value="1137"/>
</dbReference>
<dbReference type="STRING" id="284593.Q6FUF3"/>
<dbReference type="MEROPS" id="C26.957"/>
<dbReference type="EnsemblFungi" id="CAGL0F03927g-T">
    <property type="protein sequence ID" value="CAGL0F03927g-T-p1"/>
    <property type="gene ID" value="CAGL0F03927g"/>
</dbReference>
<dbReference type="KEGG" id="cgr:2887636"/>
<dbReference type="CGD" id="CAL0129288">
    <property type="gene designation" value="CAGL0F03927g"/>
</dbReference>
<dbReference type="VEuPathDB" id="FungiDB:B1J91_F03927g"/>
<dbReference type="VEuPathDB" id="FungiDB:CAGL0F03927g"/>
<dbReference type="eggNOG" id="KOG1622">
    <property type="taxonomic scope" value="Eukaryota"/>
</dbReference>
<dbReference type="HOGENOM" id="CLU_014340_0_5_1"/>
<dbReference type="InParanoid" id="Q6FUF3"/>
<dbReference type="OMA" id="IWQSFAV"/>
<dbReference type="UniPathway" id="UPA00189">
    <property type="reaction ID" value="UER00296"/>
</dbReference>
<dbReference type="Proteomes" id="UP000002428">
    <property type="component" value="Chromosome F"/>
</dbReference>
<dbReference type="GO" id="GO:0005829">
    <property type="term" value="C:cytosol"/>
    <property type="evidence" value="ECO:0007669"/>
    <property type="project" value="UniProtKB-SubCell"/>
</dbReference>
<dbReference type="GO" id="GO:0005524">
    <property type="term" value="F:ATP binding"/>
    <property type="evidence" value="ECO:0007669"/>
    <property type="project" value="UniProtKB-KW"/>
</dbReference>
<dbReference type="GO" id="GO:0003922">
    <property type="term" value="F:GMP synthase (glutamine-hydrolyzing) activity"/>
    <property type="evidence" value="ECO:0000250"/>
    <property type="project" value="UniProtKB"/>
</dbReference>
<dbReference type="GO" id="GO:0003921">
    <property type="term" value="F:GMP synthase activity"/>
    <property type="evidence" value="ECO:0007669"/>
    <property type="project" value="InterPro"/>
</dbReference>
<dbReference type="GO" id="GO:0006177">
    <property type="term" value="P:GMP biosynthetic process"/>
    <property type="evidence" value="ECO:0000250"/>
    <property type="project" value="UniProtKB"/>
</dbReference>
<dbReference type="CDD" id="cd01742">
    <property type="entry name" value="GATase1_GMP_Synthase"/>
    <property type="match status" value="1"/>
</dbReference>
<dbReference type="CDD" id="cd01997">
    <property type="entry name" value="GMP_synthase_C"/>
    <property type="match status" value="1"/>
</dbReference>
<dbReference type="FunFam" id="3.30.300.10:FF:000002">
    <property type="entry name" value="GMP synthase [glutamine-hydrolyzing]"/>
    <property type="match status" value="1"/>
</dbReference>
<dbReference type="FunFam" id="3.40.50.620:FF:000001">
    <property type="entry name" value="GMP synthase [glutamine-hydrolyzing]"/>
    <property type="match status" value="1"/>
</dbReference>
<dbReference type="FunFam" id="3.40.50.880:FF:000001">
    <property type="entry name" value="GMP synthase [glutamine-hydrolyzing]"/>
    <property type="match status" value="1"/>
</dbReference>
<dbReference type="Gene3D" id="3.30.300.10">
    <property type="match status" value="1"/>
</dbReference>
<dbReference type="Gene3D" id="3.40.50.880">
    <property type="match status" value="1"/>
</dbReference>
<dbReference type="Gene3D" id="3.40.50.620">
    <property type="entry name" value="HUPs"/>
    <property type="match status" value="1"/>
</dbReference>
<dbReference type="HAMAP" id="MF_00344">
    <property type="entry name" value="GMP_synthase"/>
    <property type="match status" value="1"/>
</dbReference>
<dbReference type="InterPro" id="IPR029062">
    <property type="entry name" value="Class_I_gatase-like"/>
</dbReference>
<dbReference type="InterPro" id="IPR017926">
    <property type="entry name" value="GATASE"/>
</dbReference>
<dbReference type="InterPro" id="IPR001674">
    <property type="entry name" value="GMP_synth_C"/>
</dbReference>
<dbReference type="InterPro" id="IPR004739">
    <property type="entry name" value="GMP_synth_GATase"/>
</dbReference>
<dbReference type="InterPro" id="IPR022955">
    <property type="entry name" value="GMP_synthase"/>
</dbReference>
<dbReference type="InterPro" id="IPR025777">
    <property type="entry name" value="GMPS_ATP_PPase_dom"/>
</dbReference>
<dbReference type="InterPro" id="IPR022310">
    <property type="entry name" value="NAD/GMP_synthase"/>
</dbReference>
<dbReference type="InterPro" id="IPR014729">
    <property type="entry name" value="Rossmann-like_a/b/a_fold"/>
</dbReference>
<dbReference type="NCBIfam" id="TIGR00884">
    <property type="entry name" value="guaA_Cterm"/>
    <property type="match status" value="1"/>
</dbReference>
<dbReference type="NCBIfam" id="TIGR00888">
    <property type="entry name" value="guaA_Nterm"/>
    <property type="match status" value="1"/>
</dbReference>
<dbReference type="NCBIfam" id="NF000848">
    <property type="entry name" value="PRK00074.1"/>
    <property type="match status" value="1"/>
</dbReference>
<dbReference type="PANTHER" id="PTHR11922:SF2">
    <property type="entry name" value="GMP SYNTHASE [GLUTAMINE-HYDROLYZING]"/>
    <property type="match status" value="1"/>
</dbReference>
<dbReference type="PANTHER" id="PTHR11922">
    <property type="entry name" value="GMP SYNTHASE-RELATED"/>
    <property type="match status" value="1"/>
</dbReference>
<dbReference type="Pfam" id="PF00117">
    <property type="entry name" value="GATase"/>
    <property type="match status" value="1"/>
</dbReference>
<dbReference type="Pfam" id="PF00958">
    <property type="entry name" value="GMP_synt_C"/>
    <property type="match status" value="1"/>
</dbReference>
<dbReference type="Pfam" id="PF02540">
    <property type="entry name" value="NAD_synthase"/>
    <property type="match status" value="1"/>
</dbReference>
<dbReference type="PRINTS" id="PR00097">
    <property type="entry name" value="ANTSNTHASEII"/>
</dbReference>
<dbReference type="PRINTS" id="PR00096">
    <property type="entry name" value="GATASE"/>
</dbReference>
<dbReference type="SUPFAM" id="SSF52402">
    <property type="entry name" value="Adenine nucleotide alpha hydrolases-like"/>
    <property type="match status" value="1"/>
</dbReference>
<dbReference type="SUPFAM" id="SSF52317">
    <property type="entry name" value="Class I glutamine amidotransferase-like"/>
    <property type="match status" value="1"/>
</dbReference>
<dbReference type="SUPFAM" id="SSF54810">
    <property type="entry name" value="GMP synthetase C-terminal dimerisation domain"/>
    <property type="match status" value="1"/>
</dbReference>
<dbReference type="PROSITE" id="PS51273">
    <property type="entry name" value="GATASE_TYPE_1"/>
    <property type="match status" value="1"/>
</dbReference>
<dbReference type="PROSITE" id="PS51553">
    <property type="entry name" value="GMPS_ATP_PPASE"/>
    <property type="match status" value="1"/>
</dbReference>
<name>GUAA_CANGA</name>
<protein>
    <recommendedName>
        <fullName>GMP synthase [glutamine-hydrolyzing]</fullName>
        <ecNumber evidence="1">6.3.5.2</ecNumber>
    </recommendedName>
    <alternativeName>
        <fullName>GMP synthetase</fullName>
    </alternativeName>
    <alternativeName>
        <fullName>Glutamine amidotransferase</fullName>
    </alternativeName>
</protein>
<keyword id="KW-0067">ATP-binding</keyword>
<keyword id="KW-0963">Cytoplasm</keyword>
<keyword id="KW-0315">Glutamine amidotransferase</keyword>
<keyword id="KW-0332">GMP biosynthesis</keyword>
<keyword id="KW-0436">Ligase</keyword>
<keyword id="KW-0460">Magnesium</keyword>
<keyword id="KW-0547">Nucleotide-binding</keyword>
<keyword id="KW-0658">Purine biosynthesis</keyword>
<keyword id="KW-1185">Reference proteome</keyword>
<reference key="1">
    <citation type="journal article" date="2004" name="Nature">
        <title>Genome evolution in yeasts.</title>
        <authorList>
            <person name="Dujon B."/>
            <person name="Sherman D."/>
            <person name="Fischer G."/>
            <person name="Durrens P."/>
            <person name="Casaregola S."/>
            <person name="Lafontaine I."/>
            <person name="de Montigny J."/>
            <person name="Marck C."/>
            <person name="Neuveglise C."/>
            <person name="Talla E."/>
            <person name="Goffard N."/>
            <person name="Frangeul L."/>
            <person name="Aigle M."/>
            <person name="Anthouard V."/>
            <person name="Babour A."/>
            <person name="Barbe V."/>
            <person name="Barnay S."/>
            <person name="Blanchin S."/>
            <person name="Beckerich J.-M."/>
            <person name="Beyne E."/>
            <person name="Bleykasten C."/>
            <person name="Boisrame A."/>
            <person name="Boyer J."/>
            <person name="Cattolico L."/>
            <person name="Confanioleri F."/>
            <person name="de Daruvar A."/>
            <person name="Despons L."/>
            <person name="Fabre E."/>
            <person name="Fairhead C."/>
            <person name="Ferry-Dumazet H."/>
            <person name="Groppi A."/>
            <person name="Hantraye F."/>
            <person name="Hennequin C."/>
            <person name="Jauniaux N."/>
            <person name="Joyet P."/>
            <person name="Kachouri R."/>
            <person name="Kerrest A."/>
            <person name="Koszul R."/>
            <person name="Lemaire M."/>
            <person name="Lesur I."/>
            <person name="Ma L."/>
            <person name="Muller H."/>
            <person name="Nicaud J.-M."/>
            <person name="Nikolski M."/>
            <person name="Oztas S."/>
            <person name="Ozier-Kalogeropoulos O."/>
            <person name="Pellenz S."/>
            <person name="Potier S."/>
            <person name="Richard G.-F."/>
            <person name="Straub M.-L."/>
            <person name="Suleau A."/>
            <person name="Swennen D."/>
            <person name="Tekaia F."/>
            <person name="Wesolowski-Louvel M."/>
            <person name="Westhof E."/>
            <person name="Wirth B."/>
            <person name="Zeniou-Meyer M."/>
            <person name="Zivanovic Y."/>
            <person name="Bolotin-Fukuhara M."/>
            <person name="Thierry A."/>
            <person name="Bouchier C."/>
            <person name="Caudron B."/>
            <person name="Scarpelli C."/>
            <person name="Gaillardin C."/>
            <person name="Weissenbach J."/>
            <person name="Wincker P."/>
            <person name="Souciet J.-L."/>
        </authorList>
    </citation>
    <scope>NUCLEOTIDE SEQUENCE [LARGE SCALE GENOMIC DNA]</scope>
    <source>
        <strain>ATCC 2001 / BCRC 20586 / JCM 3761 / NBRC 0622 / NRRL Y-65 / CBS 138</strain>
    </source>
</reference>
<accession>Q6FUF3</accession>
<sequence>MSSIEQVNEVFDTILVLDFGSQYSHLITRRLREFNIYAEMLPCTQKIADLHFKPKGVIMSGGPYSVYAEDAPHVDHAIFDLGVPILGICYGMQELAWINGKQVARGEKREYGPATLNVLDKEDALFKNVDHSTVWMSHGDKLHGLPTGFKVIATSDNSPYCGIVHESKQIYGIQFHPEVTHSSNGKTLLKNFAVDLCHAKQNWTMKNFIGTEVQRIRDLVGPTAEVIGAVSGGVDSTVASKLMTEAIGDRFHAILVDNGVLRLNEAATVKKTLVDGLGINLTVVDAADEFLDNLKGVTDPEKKRKIIGNTFIHVFEREAEKIKPKDGKAIEFLLQGTLYPDVIESISFKGPSQTIKTHHNVGGLLENMKLKLIEPLRELFKDEVRELGELLGISHELVWRHPFPGPGIAIRVLGEVTREQVEIARKADHIYIEEIRKAGLYDKISQAFACLLPVKSVGVMGDQRTYEQVIALRAIETTDFMTADWYPFEHSFLRKVASRIVNEVDGVARVTYDITSKPPATVEWE</sequence>
<organism>
    <name type="scientific">Candida glabrata (strain ATCC 2001 / BCRC 20586 / JCM 3761 / NBRC 0622 / NRRL Y-65 / CBS 138)</name>
    <name type="common">Yeast</name>
    <name type="synonym">Nakaseomyces glabratus</name>
    <dbReference type="NCBI Taxonomy" id="284593"/>
    <lineage>
        <taxon>Eukaryota</taxon>
        <taxon>Fungi</taxon>
        <taxon>Dikarya</taxon>
        <taxon>Ascomycota</taxon>
        <taxon>Saccharomycotina</taxon>
        <taxon>Saccharomycetes</taxon>
        <taxon>Saccharomycetales</taxon>
        <taxon>Saccharomycetaceae</taxon>
        <taxon>Nakaseomyces</taxon>
    </lineage>
</organism>
<feature type="chain" id="PRO_0000286147" description="GMP synthase [glutamine-hydrolyzing]">
    <location>
        <begin position="1"/>
        <end position="525"/>
    </location>
</feature>
<feature type="domain" description="Glutamine amidotransferase type-1" evidence="5">
    <location>
        <begin position="13"/>
        <end position="202"/>
    </location>
</feature>
<feature type="domain" description="GMPS ATP-PPase" evidence="6">
    <location>
        <begin position="203"/>
        <end position="400"/>
    </location>
</feature>
<feature type="active site" description="Nucleophile" evidence="5">
    <location>
        <position position="89"/>
    </location>
</feature>
<feature type="active site" evidence="5">
    <location>
        <position position="176"/>
    </location>
</feature>
<feature type="active site" evidence="5">
    <location>
        <position position="178"/>
    </location>
</feature>
<feature type="binding site" evidence="6">
    <location>
        <begin position="231"/>
        <end position="237"/>
    </location>
    <ligand>
        <name>ATP</name>
        <dbReference type="ChEBI" id="CHEBI:30616"/>
    </ligand>
</feature>
<feature type="binding site" evidence="2">
    <location>
        <position position="304"/>
    </location>
    <ligand>
        <name>XMP</name>
        <dbReference type="ChEBI" id="CHEBI:57464"/>
    </ligand>
</feature>
<feature type="binding site" evidence="2">
    <location>
        <position position="462"/>
    </location>
    <ligand>
        <name>XMP</name>
        <dbReference type="ChEBI" id="CHEBI:57464"/>
    </ligand>
</feature>
<feature type="binding site" evidence="2">
    <location>
        <position position="517"/>
    </location>
    <ligand>
        <name>XMP</name>
        <dbReference type="ChEBI" id="CHEBI:57464"/>
    </ligand>
</feature>
<feature type="binding site" evidence="2">
    <location>
        <position position="523"/>
    </location>
    <ligand>
        <name>XMP</name>
        <dbReference type="ChEBI" id="CHEBI:57464"/>
    </ligand>
</feature>
<proteinExistence type="inferred from homology"/>
<evidence type="ECO:0000250" key="1">
    <source>
        <dbReference type="UniProtKB" id="P38625"/>
    </source>
</evidence>
<evidence type="ECO:0000250" key="2">
    <source>
        <dbReference type="UniProtKB" id="P49915"/>
    </source>
</evidence>
<evidence type="ECO:0000250" key="3">
    <source>
        <dbReference type="UniProtKB" id="Q4WFT3"/>
    </source>
</evidence>
<evidence type="ECO:0000250" key="4">
    <source>
        <dbReference type="UniProtKB" id="Q9P772"/>
    </source>
</evidence>
<evidence type="ECO:0000255" key="5">
    <source>
        <dbReference type="PROSITE-ProRule" id="PRU00605"/>
    </source>
</evidence>
<evidence type="ECO:0000255" key="6">
    <source>
        <dbReference type="PROSITE-ProRule" id="PRU00886"/>
    </source>
</evidence>
<comment type="function">
    <text evidence="1">Catalyzes the conversion of xanthine monophosphate (XMP) to GMP in the presence of glutamine and ATP through an adenyl-XMP intermediate.</text>
</comment>
<comment type="catalytic activity">
    <reaction evidence="1">
        <text>XMP + L-glutamine + ATP + H2O = GMP + L-glutamate + AMP + diphosphate + 2 H(+)</text>
        <dbReference type="Rhea" id="RHEA:11680"/>
        <dbReference type="ChEBI" id="CHEBI:15377"/>
        <dbReference type="ChEBI" id="CHEBI:15378"/>
        <dbReference type="ChEBI" id="CHEBI:29985"/>
        <dbReference type="ChEBI" id="CHEBI:30616"/>
        <dbReference type="ChEBI" id="CHEBI:33019"/>
        <dbReference type="ChEBI" id="CHEBI:57464"/>
        <dbReference type="ChEBI" id="CHEBI:58115"/>
        <dbReference type="ChEBI" id="CHEBI:58359"/>
        <dbReference type="ChEBI" id="CHEBI:456215"/>
        <dbReference type="EC" id="6.3.5.2"/>
    </reaction>
</comment>
<comment type="cofactor">
    <cofactor evidence="3">
        <name>Mg(2+)</name>
        <dbReference type="ChEBI" id="CHEBI:18420"/>
    </cofactor>
</comment>
<comment type="pathway">
    <text evidence="1">Purine metabolism; GMP biosynthesis; GMP from XMP (L-Gln route): step 1/1.</text>
</comment>
<comment type="subunit">
    <text evidence="3">Homodimer.</text>
</comment>
<comment type="subcellular location">
    <subcellularLocation>
        <location evidence="4">Cytoplasm</location>
        <location evidence="4">Cytosol</location>
    </subcellularLocation>
</comment>